<protein>
    <recommendedName>
        <fullName evidence="1">Pyrrolidone-carboxylate peptidase</fullName>
        <ecNumber evidence="1">3.4.19.3</ecNumber>
    </recommendedName>
    <alternativeName>
        <fullName evidence="1">5-oxoprolyl-peptidase</fullName>
    </alternativeName>
    <alternativeName>
        <fullName evidence="1">Pyroglutamyl-peptidase I</fullName>
        <shortName evidence="1">PGP-I</shortName>
        <shortName evidence="1">Pyrase</shortName>
    </alternativeName>
</protein>
<gene>
    <name evidence="1" type="primary">pcp</name>
    <name type="ordered locus">BHWA1_02432</name>
</gene>
<name>PCP_BRAHW</name>
<dbReference type="EC" id="3.4.19.3" evidence="1"/>
<dbReference type="EMBL" id="CP001357">
    <property type="protein sequence ID" value="ACN84886.1"/>
    <property type="molecule type" value="Genomic_DNA"/>
</dbReference>
<dbReference type="RefSeq" id="WP_012671916.1">
    <property type="nucleotide sequence ID" value="NC_012225.1"/>
</dbReference>
<dbReference type="SMR" id="C0QXM0"/>
<dbReference type="STRING" id="565034.BHWA1_02432"/>
<dbReference type="MEROPS" id="C15.001"/>
<dbReference type="GeneID" id="63963573"/>
<dbReference type="KEGG" id="bhy:BHWA1_02432"/>
<dbReference type="eggNOG" id="COG2039">
    <property type="taxonomic scope" value="Bacteria"/>
</dbReference>
<dbReference type="HOGENOM" id="CLU_043960_4_0_12"/>
<dbReference type="Proteomes" id="UP000001803">
    <property type="component" value="Chromosome"/>
</dbReference>
<dbReference type="GO" id="GO:0005829">
    <property type="term" value="C:cytosol"/>
    <property type="evidence" value="ECO:0007669"/>
    <property type="project" value="InterPro"/>
</dbReference>
<dbReference type="GO" id="GO:0016920">
    <property type="term" value="F:pyroglutamyl-peptidase activity"/>
    <property type="evidence" value="ECO:0007669"/>
    <property type="project" value="UniProtKB-UniRule"/>
</dbReference>
<dbReference type="GO" id="GO:0006508">
    <property type="term" value="P:proteolysis"/>
    <property type="evidence" value="ECO:0007669"/>
    <property type="project" value="UniProtKB-KW"/>
</dbReference>
<dbReference type="CDD" id="cd00501">
    <property type="entry name" value="Peptidase_C15"/>
    <property type="match status" value="1"/>
</dbReference>
<dbReference type="FunFam" id="3.40.630.20:FF:000001">
    <property type="entry name" value="Pyrrolidone-carboxylate peptidase"/>
    <property type="match status" value="1"/>
</dbReference>
<dbReference type="Gene3D" id="3.40.630.20">
    <property type="entry name" value="Peptidase C15, pyroglutamyl peptidase I-like"/>
    <property type="match status" value="1"/>
</dbReference>
<dbReference type="HAMAP" id="MF_00417">
    <property type="entry name" value="Pyrrolid_peptidase"/>
    <property type="match status" value="1"/>
</dbReference>
<dbReference type="InterPro" id="IPR000816">
    <property type="entry name" value="Peptidase_C15"/>
</dbReference>
<dbReference type="InterPro" id="IPR016125">
    <property type="entry name" value="Peptidase_C15-like"/>
</dbReference>
<dbReference type="InterPro" id="IPR036440">
    <property type="entry name" value="Peptidase_C15-like_sf"/>
</dbReference>
<dbReference type="InterPro" id="IPR029762">
    <property type="entry name" value="PGP-I_bact-type"/>
</dbReference>
<dbReference type="InterPro" id="IPR033694">
    <property type="entry name" value="PGPEP1_Cys_AS"/>
</dbReference>
<dbReference type="InterPro" id="IPR033693">
    <property type="entry name" value="PGPEP1_Glu_AS"/>
</dbReference>
<dbReference type="NCBIfam" id="NF009676">
    <property type="entry name" value="PRK13197.1"/>
    <property type="match status" value="1"/>
</dbReference>
<dbReference type="NCBIfam" id="TIGR00504">
    <property type="entry name" value="pyro_pdase"/>
    <property type="match status" value="1"/>
</dbReference>
<dbReference type="PANTHER" id="PTHR23402">
    <property type="entry name" value="PROTEASE FAMILY C15 PYROGLUTAMYL-PEPTIDASE I-RELATED"/>
    <property type="match status" value="1"/>
</dbReference>
<dbReference type="PANTHER" id="PTHR23402:SF1">
    <property type="entry name" value="PYROGLUTAMYL-PEPTIDASE I"/>
    <property type="match status" value="1"/>
</dbReference>
<dbReference type="Pfam" id="PF01470">
    <property type="entry name" value="Peptidase_C15"/>
    <property type="match status" value="1"/>
</dbReference>
<dbReference type="PIRSF" id="PIRSF015592">
    <property type="entry name" value="Prld-crbxl_pptds"/>
    <property type="match status" value="1"/>
</dbReference>
<dbReference type="PRINTS" id="PR00706">
    <property type="entry name" value="PYROGLUPTASE"/>
</dbReference>
<dbReference type="SUPFAM" id="SSF53182">
    <property type="entry name" value="Pyrrolidone carboxyl peptidase (pyroglutamate aminopeptidase)"/>
    <property type="match status" value="1"/>
</dbReference>
<dbReference type="PROSITE" id="PS01334">
    <property type="entry name" value="PYRASE_CYS"/>
    <property type="match status" value="1"/>
</dbReference>
<dbReference type="PROSITE" id="PS01333">
    <property type="entry name" value="PYRASE_GLU"/>
    <property type="match status" value="1"/>
</dbReference>
<comment type="function">
    <text evidence="1">Removes 5-oxoproline from various penultimate amino acid residues except L-proline.</text>
</comment>
<comment type="catalytic activity">
    <reaction evidence="1">
        <text>Release of an N-terminal pyroglutamyl group from a polypeptide, the second amino acid generally not being Pro.</text>
        <dbReference type="EC" id="3.4.19.3"/>
    </reaction>
</comment>
<comment type="subunit">
    <text evidence="1">Homotetramer.</text>
</comment>
<comment type="subcellular location">
    <subcellularLocation>
        <location evidence="1">Cytoplasm</location>
    </subcellularLocation>
</comment>
<comment type="similarity">
    <text evidence="1">Belongs to the peptidase C15 family.</text>
</comment>
<keyword id="KW-0963">Cytoplasm</keyword>
<keyword id="KW-0378">Hydrolase</keyword>
<keyword id="KW-0645">Protease</keyword>
<keyword id="KW-0788">Thiol protease</keyword>
<proteinExistence type="inferred from homology"/>
<accession>C0QXM0</accession>
<organism>
    <name type="scientific">Brachyspira hyodysenteriae (strain ATCC 49526 / WA1)</name>
    <dbReference type="NCBI Taxonomy" id="565034"/>
    <lineage>
        <taxon>Bacteria</taxon>
        <taxon>Pseudomonadati</taxon>
        <taxon>Spirochaetota</taxon>
        <taxon>Spirochaetia</taxon>
        <taxon>Brachyspirales</taxon>
        <taxon>Brachyspiraceae</taxon>
        <taxon>Brachyspira</taxon>
    </lineage>
</organism>
<reference key="1">
    <citation type="journal article" date="2009" name="PLoS ONE">
        <title>Genome sequence of the pathogenic intestinal spirochete Brachyspira hyodysenteriae reveals adaptations to its lifestyle in the porcine large intestine.</title>
        <authorList>
            <person name="Bellgard M.I."/>
            <person name="Wanchanthuek P."/>
            <person name="La T."/>
            <person name="Ryan K."/>
            <person name="Moolhuijzen P."/>
            <person name="Albertyn Z."/>
            <person name="Shaban B."/>
            <person name="Motro Y."/>
            <person name="Dunn D.S."/>
            <person name="Schibeci D."/>
            <person name="Hunter A."/>
            <person name="Barrero R."/>
            <person name="Phillips N.D."/>
            <person name="Hampson D.J."/>
        </authorList>
    </citation>
    <scope>NUCLEOTIDE SEQUENCE [LARGE SCALE GENOMIC DNA]</scope>
    <source>
        <strain>ATCC 49526 / WA1</strain>
    </source>
</reference>
<evidence type="ECO:0000255" key="1">
    <source>
        <dbReference type="HAMAP-Rule" id="MF_00417"/>
    </source>
</evidence>
<sequence length="201" mass="22815">MKALITGFEPFDKEEINPSWEAVSSLHNNIDDIEIIKLKLPTVFKKSYEKLFDSLENIKPDIVICVGQAGGRYEISLERVAVNIDDAGIKDNEGNQPIDEIIFNDGENAYFSRLPIKRIKEELNKISIPSAVSNTAGTFVCNHIMYSLLYYIKKNNLNIKGGFIHVPYITEQILDKPNTPYMTKDMIVKALEVIIKTSLYN</sequence>
<feature type="chain" id="PRO_1000192221" description="Pyrrolidone-carboxylate peptidase">
    <location>
        <begin position="1"/>
        <end position="201"/>
    </location>
</feature>
<feature type="active site" evidence="1">
    <location>
        <position position="78"/>
    </location>
</feature>
<feature type="active site" evidence="1">
    <location>
        <position position="141"/>
    </location>
</feature>
<feature type="active site" evidence="1">
    <location>
        <position position="165"/>
    </location>
</feature>